<proteinExistence type="inferred from homology"/>
<name>TELL_STAAW</name>
<reference key="1">
    <citation type="journal article" date="2002" name="Lancet">
        <title>Genome and virulence determinants of high virulence community-acquired MRSA.</title>
        <authorList>
            <person name="Baba T."/>
            <person name="Takeuchi F."/>
            <person name="Kuroda M."/>
            <person name="Yuzawa H."/>
            <person name="Aoki K."/>
            <person name="Oguchi A."/>
            <person name="Nagai Y."/>
            <person name="Iwama N."/>
            <person name="Asano K."/>
            <person name="Naimi T."/>
            <person name="Kuroda H."/>
            <person name="Cui L."/>
            <person name="Yamamoto K."/>
            <person name="Hiramatsu K."/>
        </authorList>
    </citation>
    <scope>NUCLEOTIDE SEQUENCE [LARGE SCALE GENOMIC DNA]</scope>
    <source>
        <strain>MW2</strain>
    </source>
</reference>
<comment type="similarity">
    <text evidence="1">Belongs to the TelA family.</text>
</comment>
<organism>
    <name type="scientific">Staphylococcus aureus (strain MW2)</name>
    <dbReference type="NCBI Taxonomy" id="196620"/>
    <lineage>
        <taxon>Bacteria</taxon>
        <taxon>Bacillati</taxon>
        <taxon>Bacillota</taxon>
        <taxon>Bacilli</taxon>
        <taxon>Bacillales</taxon>
        <taxon>Staphylococcaceae</taxon>
        <taxon>Staphylococcus</taxon>
    </lineage>
</organism>
<protein>
    <recommendedName>
        <fullName>TelA-like protein MW1294</fullName>
    </recommendedName>
</protein>
<sequence>MTENKSFKESHPLDDFISDKELSNTTIQKEKLTIEQQKQVDTISKQINPLDNEGLLAFGSDLQKQMSQFSHQMLDEVQSKDVGPIGDTLSDLISKLKSVNPNELNTDKPSMLKRIFSRAKSSINEIFSRMQSVSAQVDRITIQLQKHQTHLTRDIELLDTLYDKNKQYFDDLSLHIIAAQQKKLQLENEKLPQLQQQAQQSTNQMDIQHVADMQQFIDRLDKRIYDLQLSRQIALQTAPQIRMIQNVNQALAEKIQSSILTSIPLWKNQMAIALTLMRQRNAVAAQRAVTDTTNDLLTANAEMLKQNAIETATENERGIVDLDTLKRTQRNIIETIEETLIIQQHGREERQLAEKELQQLEQDLKSHLVNIKGTNKQS</sequence>
<evidence type="ECO:0000305" key="1"/>
<dbReference type="EMBL" id="BA000033">
    <property type="protein sequence ID" value="BAB95159.1"/>
    <property type="molecule type" value="Genomic_DNA"/>
</dbReference>
<dbReference type="RefSeq" id="WP_000138403.1">
    <property type="nucleotide sequence ID" value="NC_003923.1"/>
</dbReference>
<dbReference type="SMR" id="Q8NWS1"/>
<dbReference type="KEGG" id="sam:MW1294"/>
<dbReference type="HOGENOM" id="CLU_032111_0_0_9"/>
<dbReference type="InterPro" id="IPR008863">
    <property type="entry name" value="Toxic_anion-R_TelA"/>
</dbReference>
<dbReference type="PANTHER" id="PTHR38432">
    <property type="entry name" value="TELA-LIKE PROTEIN SAOUHSC_01408"/>
    <property type="match status" value="1"/>
</dbReference>
<dbReference type="PANTHER" id="PTHR38432:SF1">
    <property type="entry name" value="TELA-LIKE PROTEIN SAOUHSC_01408"/>
    <property type="match status" value="1"/>
</dbReference>
<dbReference type="Pfam" id="PF05816">
    <property type="entry name" value="TelA"/>
    <property type="match status" value="1"/>
</dbReference>
<dbReference type="PIRSF" id="PIRSF026508">
    <property type="entry name" value="TelA"/>
    <property type="match status" value="1"/>
</dbReference>
<accession>Q8NWS1</accession>
<feature type="chain" id="PRO_0000172807" description="TelA-like protein MW1294">
    <location>
        <begin position="1"/>
        <end position="378"/>
    </location>
</feature>
<gene>
    <name type="ordered locus">MW1294</name>
</gene>